<organism>
    <name type="scientific">Swinepox virus (strain Kasza)</name>
    <name type="common">SWPV</name>
    <dbReference type="NCBI Taxonomy" id="10277"/>
    <lineage>
        <taxon>Viruses</taxon>
        <taxon>Varidnaviria</taxon>
        <taxon>Bamfordvirae</taxon>
        <taxon>Nucleocytoviricota</taxon>
        <taxon>Pokkesviricetes</taxon>
        <taxon>Chitovirales</taxon>
        <taxon>Poxviridae</taxon>
        <taxon>Chordopoxvirinae</taxon>
        <taxon>Suipoxvirus</taxon>
        <taxon>Swinepox virus</taxon>
    </lineage>
</organism>
<dbReference type="EMBL" id="L22013">
    <property type="protein sequence ID" value="AAC37862.1"/>
    <property type="molecule type" value="Genomic_DNA"/>
</dbReference>
<dbReference type="SMR" id="P32223"/>
<dbReference type="KEGG" id="vg:932394"/>
<dbReference type="Gene3D" id="2.60.40.10">
    <property type="entry name" value="Immunoglobulins"/>
    <property type="match status" value="1"/>
</dbReference>
<dbReference type="InterPro" id="IPR013783">
    <property type="entry name" value="Ig-like_fold"/>
</dbReference>
<dbReference type="InterPro" id="IPR055139">
    <property type="entry name" value="IL18BP-like_dom"/>
</dbReference>
<dbReference type="Pfam" id="PF22009">
    <property type="entry name" value="YLDV-IL18BP-like"/>
    <property type="match status" value="1"/>
</dbReference>
<name>VC09_SWPVK</name>
<accession>P32223</accession>
<feature type="chain" id="PRO_0000099752" description="Uncharacterized protein C9">
    <location>
        <begin position="1"/>
        <end position="134"/>
    </location>
</feature>
<proteinExistence type="predicted"/>
<reference key="1">
    <citation type="journal article" date="1993" name="Virology">
        <title>DNA sequence analysis of conserved and unique regions of swinepox virus: identification of genetic elements supporting phenotypic observations including a novel G protein-coupled receptor homologue.</title>
        <authorList>
            <person name="Massung R.F."/>
            <person name="Jayarama V."/>
            <person name="Moyer R.W."/>
        </authorList>
    </citation>
    <scope>NUCLEOTIDE SEQUENCE [GENOMIC DNA]</scope>
</reference>
<protein>
    <recommendedName>
        <fullName>Uncharacterized protein C9</fullName>
    </recommendedName>
</protein>
<gene>
    <name type="ORF">C9L</name>
</gene>
<sequence length="134" mass="15811">MNRNMWIVLSCVLYMIYICNGRDVLLYPPHKKTNKVIVKCNGYTNSTYSILYWMVGNNNTFVEQLNSDHYKEKKYNSTEKNEHMYKLRTDLIIYNITSEMEMTKLTCVLSDIYTPIKASIILNNLWSCLNTTQV</sequence>
<organismHost>
    <name type="scientific">Sus scrofa</name>
    <name type="common">Pig</name>
    <dbReference type="NCBI Taxonomy" id="9823"/>
</organismHost>